<proteinExistence type="inferred from homology"/>
<geneLocation type="mitochondrion"/>
<dbReference type="EC" id="7.1.1.9"/>
<dbReference type="EMBL" id="X52392">
    <property type="protein sequence ID" value="CAA36631.1"/>
    <property type="molecule type" value="Genomic_DNA"/>
</dbReference>
<dbReference type="PIR" id="S10193">
    <property type="entry name" value="S10193"/>
</dbReference>
<dbReference type="RefSeq" id="NP_006921.2">
    <property type="nucleotide sequence ID" value="NC_001323.1"/>
</dbReference>
<dbReference type="SMR" id="P18945"/>
<dbReference type="FunCoup" id="P18945">
    <property type="interactions" value="21"/>
</dbReference>
<dbReference type="STRING" id="9031.ENSGALP00000050525"/>
<dbReference type="GlyGen" id="P18945">
    <property type="glycosylation" value="1 site"/>
</dbReference>
<dbReference type="PaxDb" id="9031-ENSGALP00000034618"/>
<dbReference type="Ensembl" id="ENSGALT00010000024.1">
    <property type="protein sequence ID" value="ENSGALP00010000008.1"/>
    <property type="gene ID" value="ENSGALG00010000024.1"/>
</dbReference>
<dbReference type="VEuPathDB" id="HostDB:geneid_63549467"/>
<dbReference type="eggNOG" id="KOG4664">
    <property type="taxonomic scope" value="Eukaryota"/>
</dbReference>
<dbReference type="GeneTree" id="ENSGT00390000013064"/>
<dbReference type="HOGENOM" id="CLU_044071_0_0_1"/>
<dbReference type="InParanoid" id="P18945"/>
<dbReference type="OMA" id="SIYWWGS"/>
<dbReference type="OrthoDB" id="10050457at2759"/>
<dbReference type="Reactome" id="R-GGA-5628897">
    <property type="pathway name" value="TP53 Regulates Metabolic Genes"/>
</dbReference>
<dbReference type="Reactome" id="R-GGA-611105">
    <property type="pathway name" value="Respiratory electron transport"/>
</dbReference>
<dbReference type="Reactome" id="R-GGA-9707564">
    <property type="pathway name" value="Cytoprotection by HMOX1"/>
</dbReference>
<dbReference type="PRO" id="PR:P18945"/>
<dbReference type="Proteomes" id="UP000000539">
    <property type="component" value="Mitochondrion MT"/>
</dbReference>
<dbReference type="Bgee" id="ENSGALG00000035334">
    <property type="expression patterns" value="Expressed in cerebellum and 13 other cell types or tissues"/>
</dbReference>
<dbReference type="GO" id="GO:0005743">
    <property type="term" value="C:mitochondrial inner membrane"/>
    <property type="evidence" value="ECO:0007669"/>
    <property type="project" value="UniProtKB-SubCell"/>
</dbReference>
<dbReference type="GO" id="GO:0005739">
    <property type="term" value="C:mitochondrion"/>
    <property type="evidence" value="ECO:0000314"/>
    <property type="project" value="AgBase"/>
</dbReference>
<dbReference type="GO" id="GO:0045277">
    <property type="term" value="C:respiratory chain complex IV"/>
    <property type="evidence" value="ECO:0000250"/>
    <property type="project" value="UniProtKB"/>
</dbReference>
<dbReference type="GO" id="GO:0004129">
    <property type="term" value="F:cytochrome-c oxidase activity"/>
    <property type="evidence" value="ECO:0007669"/>
    <property type="project" value="UniProtKB-EC"/>
</dbReference>
<dbReference type="GO" id="GO:0006123">
    <property type="term" value="P:mitochondrial electron transport, cytochrome c to oxygen"/>
    <property type="evidence" value="ECO:0000318"/>
    <property type="project" value="GO_Central"/>
</dbReference>
<dbReference type="GO" id="GO:0008535">
    <property type="term" value="P:respiratory chain complex IV assembly"/>
    <property type="evidence" value="ECO:0007669"/>
    <property type="project" value="Ensembl"/>
</dbReference>
<dbReference type="CDD" id="cd01665">
    <property type="entry name" value="Cyt_c_Oxidase_III"/>
    <property type="match status" value="1"/>
</dbReference>
<dbReference type="FunFam" id="1.10.287.70:FF:000048">
    <property type="entry name" value="Cytochrome c oxidase subunit 3"/>
    <property type="match status" value="1"/>
</dbReference>
<dbReference type="FunFam" id="1.20.120.80:FF:000002">
    <property type="entry name" value="Cytochrome c oxidase subunit 3"/>
    <property type="match status" value="1"/>
</dbReference>
<dbReference type="Gene3D" id="1.10.287.70">
    <property type="match status" value="1"/>
</dbReference>
<dbReference type="Gene3D" id="1.20.120.80">
    <property type="entry name" value="Cytochrome c oxidase, subunit III, four-helix bundle"/>
    <property type="match status" value="1"/>
</dbReference>
<dbReference type="InterPro" id="IPR024791">
    <property type="entry name" value="Cyt_c/ubiquinol_Oxase_su3"/>
</dbReference>
<dbReference type="InterPro" id="IPR033945">
    <property type="entry name" value="Cyt_c_oxase_su3_dom"/>
</dbReference>
<dbReference type="InterPro" id="IPR000298">
    <property type="entry name" value="Cyt_c_oxidase-like_su3"/>
</dbReference>
<dbReference type="InterPro" id="IPR035973">
    <property type="entry name" value="Cyt_c_oxidase_su3-like_sf"/>
</dbReference>
<dbReference type="InterPro" id="IPR013833">
    <property type="entry name" value="Cyt_c_oxidase_su3_a-hlx"/>
</dbReference>
<dbReference type="PANTHER" id="PTHR11403:SF7">
    <property type="entry name" value="CYTOCHROME C OXIDASE SUBUNIT 3"/>
    <property type="match status" value="1"/>
</dbReference>
<dbReference type="PANTHER" id="PTHR11403">
    <property type="entry name" value="CYTOCHROME C OXIDASE SUBUNIT III"/>
    <property type="match status" value="1"/>
</dbReference>
<dbReference type="Pfam" id="PF00510">
    <property type="entry name" value="COX3"/>
    <property type="match status" value="1"/>
</dbReference>
<dbReference type="SUPFAM" id="SSF81452">
    <property type="entry name" value="Cytochrome c oxidase subunit III-like"/>
    <property type="match status" value="1"/>
</dbReference>
<dbReference type="PROSITE" id="PS50253">
    <property type="entry name" value="COX3"/>
    <property type="match status" value="1"/>
</dbReference>
<name>COX3_CHICK</name>
<sequence>MAHQAHSYHMVDPSPWPIFGAAAALLTTSGLIMWFHYSSTTLLTMGLLSMLLVMLQWWRDVVRESTFQGHHTPTVQKGLRYGMILFITSEAFFFLGFFWAFFHSSLAPTPELGGQWPPTGVKPLNPLEVPLLNTAILLASGVTVTWAHHSITEGNRKQAIHALTLTILLGFYFTALQAMEYHEASFSIADSVYGSTFFVATGFHGLHVIIGSSFLTVCLLRLIKFHFTPNHHFGFEAAAWYWHFVDIIWLFLYMSMYWWGS</sequence>
<protein>
    <recommendedName>
        <fullName>Cytochrome c oxidase subunit 3</fullName>
        <ecNumber>7.1.1.9</ecNumber>
    </recommendedName>
    <alternativeName>
        <fullName>Cytochrome c oxidase polypeptide III</fullName>
    </alternativeName>
</protein>
<feature type="chain" id="PRO_0000183757" description="Cytochrome c oxidase subunit 3">
    <location>
        <begin position="1"/>
        <end position="261"/>
    </location>
</feature>
<feature type="topological domain" description="Mitochondrial matrix" evidence="1">
    <location>
        <begin position="1"/>
        <end position="15"/>
    </location>
</feature>
<feature type="transmembrane region" description="Helical; Name=I" evidence="1">
    <location>
        <begin position="16"/>
        <end position="34"/>
    </location>
</feature>
<feature type="topological domain" description="Mitochondrial intermembrane" evidence="1">
    <location>
        <begin position="35"/>
        <end position="40"/>
    </location>
</feature>
<feature type="transmembrane region" description="Helical; Name=II" evidence="1">
    <location>
        <begin position="41"/>
        <end position="66"/>
    </location>
</feature>
<feature type="topological domain" description="Mitochondrial matrix" evidence="1">
    <location>
        <begin position="67"/>
        <end position="72"/>
    </location>
</feature>
<feature type="transmembrane region" description="Helical; Name=III" evidence="1">
    <location>
        <begin position="73"/>
        <end position="105"/>
    </location>
</feature>
<feature type="topological domain" description="Mitochondrial intermembrane" evidence="1">
    <location>
        <begin position="106"/>
        <end position="128"/>
    </location>
</feature>
<feature type="transmembrane region" description="Helical; Name=IV" evidence="1">
    <location>
        <begin position="129"/>
        <end position="152"/>
    </location>
</feature>
<feature type="topological domain" description="Mitochondrial matrix" evidence="1">
    <location>
        <begin position="153"/>
        <end position="155"/>
    </location>
</feature>
<feature type="transmembrane region" description="Helical; Name=V" evidence="1">
    <location>
        <begin position="156"/>
        <end position="183"/>
    </location>
</feature>
<feature type="topological domain" description="Mitochondrial intermembrane" evidence="1">
    <location>
        <begin position="184"/>
        <end position="190"/>
    </location>
</feature>
<feature type="transmembrane region" description="Helical; Name=VI" evidence="1">
    <location>
        <begin position="191"/>
        <end position="223"/>
    </location>
</feature>
<feature type="topological domain" description="Mitochondrial matrix" evidence="1">
    <location>
        <begin position="224"/>
        <end position="232"/>
    </location>
</feature>
<feature type="transmembrane region" description="Helical; Name=VII" evidence="1">
    <location>
        <begin position="233"/>
        <end position="256"/>
    </location>
</feature>
<feature type="topological domain" description="Mitochondrial intermembrane" evidence="1">
    <location>
        <begin position="257"/>
        <end position="261"/>
    </location>
</feature>
<organism>
    <name type="scientific">Gallus gallus</name>
    <name type="common">Chicken</name>
    <dbReference type="NCBI Taxonomy" id="9031"/>
    <lineage>
        <taxon>Eukaryota</taxon>
        <taxon>Metazoa</taxon>
        <taxon>Chordata</taxon>
        <taxon>Craniata</taxon>
        <taxon>Vertebrata</taxon>
        <taxon>Euteleostomi</taxon>
        <taxon>Archelosauria</taxon>
        <taxon>Archosauria</taxon>
        <taxon>Dinosauria</taxon>
        <taxon>Saurischia</taxon>
        <taxon>Theropoda</taxon>
        <taxon>Coelurosauria</taxon>
        <taxon>Aves</taxon>
        <taxon>Neognathae</taxon>
        <taxon>Galloanserae</taxon>
        <taxon>Galliformes</taxon>
        <taxon>Phasianidae</taxon>
        <taxon>Phasianinae</taxon>
        <taxon>Gallus</taxon>
    </lineage>
</organism>
<evidence type="ECO:0000250" key="1">
    <source>
        <dbReference type="UniProtKB" id="P00415"/>
    </source>
</evidence>
<evidence type="ECO:0000250" key="2">
    <source>
        <dbReference type="UniProtKB" id="P00420"/>
    </source>
</evidence>
<evidence type="ECO:0000305" key="3"/>
<evidence type="ECO:0000312" key="4">
    <source>
        <dbReference type="Proteomes" id="UP000000539"/>
    </source>
</evidence>
<keyword id="KW-0472">Membrane</keyword>
<keyword id="KW-0496">Mitochondrion</keyword>
<keyword id="KW-0999">Mitochondrion inner membrane</keyword>
<keyword id="KW-1185">Reference proteome</keyword>
<keyword id="KW-1278">Translocase</keyword>
<keyword id="KW-0812">Transmembrane</keyword>
<keyword id="KW-1133">Transmembrane helix</keyword>
<comment type="function">
    <text evidence="2">Component of the cytochrome c oxidase, the last enzyme in the mitochondrial electron transport chain which drives oxidative phosphorylation. The respiratory chain contains 3 multisubunit complexes succinate dehydrogenase (complex II, CII), ubiquinol-cytochrome c oxidoreductase (cytochrome b-c1 complex, complex III, CIII) and cytochrome c oxidase (complex IV, CIV), that cooperate to transfer electrons derived from NADH and succinate to molecular oxygen, creating an electrochemical gradient over the inner membrane that drives transmembrane transport and the ATP synthase. Cytochrome c oxidase is the component of the respiratory chain that catalyzes the reduction of oxygen to water. Electrons originating from reduced cytochrome c in the intermembrane space (IMS) are transferred via the dinuclear copper A center (CU(A)) of subunit 2 and heme A of subunit 1 to the active site in subunit 1, a binuclear center (BNC) formed by heme A3 and copper B (CU(B)). The BNC reduces molecular oxygen to 2 water molecules using 4 electrons from cytochrome c in the IMS and 4 protons from the mitochondrial matrix.</text>
</comment>
<comment type="catalytic activity">
    <reaction evidence="2">
        <text>4 Fe(II)-[cytochrome c] + O2 + 8 H(+)(in) = 4 Fe(III)-[cytochrome c] + 2 H2O + 4 H(+)(out)</text>
        <dbReference type="Rhea" id="RHEA:11436"/>
        <dbReference type="Rhea" id="RHEA-COMP:10350"/>
        <dbReference type="Rhea" id="RHEA-COMP:14399"/>
        <dbReference type="ChEBI" id="CHEBI:15377"/>
        <dbReference type="ChEBI" id="CHEBI:15378"/>
        <dbReference type="ChEBI" id="CHEBI:15379"/>
        <dbReference type="ChEBI" id="CHEBI:29033"/>
        <dbReference type="ChEBI" id="CHEBI:29034"/>
        <dbReference type="EC" id="7.1.1.9"/>
    </reaction>
    <physiologicalReaction direction="left-to-right" evidence="2">
        <dbReference type="Rhea" id="RHEA:11437"/>
    </physiologicalReaction>
</comment>
<comment type="subunit">
    <text evidence="1">Component of the cytochrome c oxidase (complex IV, CIV), a multisubunit enzyme composed of 14 subunits. The complex is composed of a catalytic core of 3 subunits MT-CO1, MT-CO2 and MT-CO3, encoded in the mitochondrial DNA, and 11 supernumerary subunits COX4I, COX5A, COX5B, COX6A, COX6B, COX6C, COX7A, COX7B, COX7C, COX8 and NDUFA4, which are encoded in the nuclear genome. The complex exists as a monomer or a dimer and forms supercomplexes (SCs) in the inner mitochondrial membrane with NADH-ubiquinone oxidoreductase (complex I, CI) and ubiquinol-cytochrome c oxidoreductase (cytochrome b-c1 complex, complex III, CIII), resulting in different assemblies (supercomplex SCI(1)III(2)IV(1) and megacomplex MCI(2)III(2)IV(2)).</text>
</comment>
<comment type="subcellular location">
    <subcellularLocation>
        <location evidence="1">Mitochondrion inner membrane</location>
        <topology evidence="1">Multi-pass membrane protein</topology>
    </subcellularLocation>
</comment>
<comment type="similarity">
    <text evidence="3">Belongs to the cytochrome c oxidase subunit 3 family.</text>
</comment>
<accession>P18945</accession>
<reference key="1">
    <citation type="journal article" date="1990" name="J. Mol. Biol.">
        <title>Sequence and gene organization of the chicken mitochondrial genome. A novel gene order in higher vertebrates.</title>
        <authorList>
            <person name="Desjardins P."/>
            <person name="Morais R."/>
        </authorList>
    </citation>
    <scope>NUCLEOTIDE SEQUENCE [GENOMIC DNA]</scope>
    <source>
        <strain evidence="4">Red jungle fowl</strain>
    </source>
</reference>
<reference key="2">
    <citation type="journal article" date="1991" name="Am. J. Physiol.">
        <title>Mitochondrial DNA replication and transcription are dissociated during embryonic cardiac hypertrophy.</title>
        <authorList>
            <person name="Kennedy J.M."/>
            <person name="Lobacz S.R."/>
            <person name="Kelley S.W."/>
        </authorList>
    </citation>
    <scope>NUCLEOTIDE SEQUENCE [GENOMIC DNA]</scope>
</reference>
<gene>
    <name type="primary">MT-CO3</name>
    <name type="synonym">COIII</name>
    <name type="synonym">COXIII</name>
    <name type="synonym">MTCO3</name>
</gene>